<gene>
    <name type="primary">Prox2</name>
</gene>
<name>PROX2_MOUSE</name>
<accession>Q8BII1</accession>
<reference key="1">
    <citation type="journal article" date="2005" name="Science">
        <title>The transcriptional landscape of the mammalian genome.</title>
        <authorList>
            <person name="Carninci P."/>
            <person name="Kasukawa T."/>
            <person name="Katayama S."/>
            <person name="Gough J."/>
            <person name="Frith M.C."/>
            <person name="Maeda N."/>
            <person name="Oyama R."/>
            <person name="Ravasi T."/>
            <person name="Lenhard B."/>
            <person name="Wells C."/>
            <person name="Kodzius R."/>
            <person name="Shimokawa K."/>
            <person name="Bajic V.B."/>
            <person name="Brenner S.E."/>
            <person name="Batalov S."/>
            <person name="Forrest A.R."/>
            <person name="Zavolan M."/>
            <person name="Davis M.J."/>
            <person name="Wilming L.G."/>
            <person name="Aidinis V."/>
            <person name="Allen J.E."/>
            <person name="Ambesi-Impiombato A."/>
            <person name="Apweiler R."/>
            <person name="Aturaliya R.N."/>
            <person name="Bailey T.L."/>
            <person name="Bansal M."/>
            <person name="Baxter L."/>
            <person name="Beisel K.W."/>
            <person name="Bersano T."/>
            <person name="Bono H."/>
            <person name="Chalk A.M."/>
            <person name="Chiu K.P."/>
            <person name="Choudhary V."/>
            <person name="Christoffels A."/>
            <person name="Clutterbuck D.R."/>
            <person name="Crowe M.L."/>
            <person name="Dalla E."/>
            <person name="Dalrymple B.P."/>
            <person name="de Bono B."/>
            <person name="Della Gatta G."/>
            <person name="di Bernardo D."/>
            <person name="Down T."/>
            <person name="Engstrom P."/>
            <person name="Fagiolini M."/>
            <person name="Faulkner G."/>
            <person name="Fletcher C.F."/>
            <person name="Fukushima T."/>
            <person name="Furuno M."/>
            <person name="Futaki S."/>
            <person name="Gariboldi M."/>
            <person name="Georgii-Hemming P."/>
            <person name="Gingeras T.R."/>
            <person name="Gojobori T."/>
            <person name="Green R.E."/>
            <person name="Gustincich S."/>
            <person name="Harbers M."/>
            <person name="Hayashi Y."/>
            <person name="Hensch T.K."/>
            <person name="Hirokawa N."/>
            <person name="Hill D."/>
            <person name="Huminiecki L."/>
            <person name="Iacono M."/>
            <person name="Ikeo K."/>
            <person name="Iwama A."/>
            <person name="Ishikawa T."/>
            <person name="Jakt M."/>
            <person name="Kanapin A."/>
            <person name="Katoh M."/>
            <person name="Kawasawa Y."/>
            <person name="Kelso J."/>
            <person name="Kitamura H."/>
            <person name="Kitano H."/>
            <person name="Kollias G."/>
            <person name="Krishnan S.P."/>
            <person name="Kruger A."/>
            <person name="Kummerfeld S.K."/>
            <person name="Kurochkin I.V."/>
            <person name="Lareau L.F."/>
            <person name="Lazarevic D."/>
            <person name="Lipovich L."/>
            <person name="Liu J."/>
            <person name="Liuni S."/>
            <person name="McWilliam S."/>
            <person name="Madan Babu M."/>
            <person name="Madera M."/>
            <person name="Marchionni L."/>
            <person name="Matsuda H."/>
            <person name="Matsuzawa S."/>
            <person name="Miki H."/>
            <person name="Mignone F."/>
            <person name="Miyake S."/>
            <person name="Morris K."/>
            <person name="Mottagui-Tabar S."/>
            <person name="Mulder N."/>
            <person name="Nakano N."/>
            <person name="Nakauchi H."/>
            <person name="Ng P."/>
            <person name="Nilsson R."/>
            <person name="Nishiguchi S."/>
            <person name="Nishikawa S."/>
            <person name="Nori F."/>
            <person name="Ohara O."/>
            <person name="Okazaki Y."/>
            <person name="Orlando V."/>
            <person name="Pang K.C."/>
            <person name="Pavan W.J."/>
            <person name="Pavesi G."/>
            <person name="Pesole G."/>
            <person name="Petrovsky N."/>
            <person name="Piazza S."/>
            <person name="Reed J."/>
            <person name="Reid J.F."/>
            <person name="Ring B.Z."/>
            <person name="Ringwald M."/>
            <person name="Rost B."/>
            <person name="Ruan Y."/>
            <person name="Salzberg S.L."/>
            <person name="Sandelin A."/>
            <person name="Schneider C."/>
            <person name="Schoenbach C."/>
            <person name="Sekiguchi K."/>
            <person name="Semple C.A."/>
            <person name="Seno S."/>
            <person name="Sessa L."/>
            <person name="Sheng Y."/>
            <person name="Shibata Y."/>
            <person name="Shimada H."/>
            <person name="Shimada K."/>
            <person name="Silva D."/>
            <person name="Sinclair B."/>
            <person name="Sperling S."/>
            <person name="Stupka E."/>
            <person name="Sugiura K."/>
            <person name="Sultana R."/>
            <person name="Takenaka Y."/>
            <person name="Taki K."/>
            <person name="Tammoja K."/>
            <person name="Tan S.L."/>
            <person name="Tang S."/>
            <person name="Taylor M.S."/>
            <person name="Tegner J."/>
            <person name="Teichmann S.A."/>
            <person name="Ueda H.R."/>
            <person name="van Nimwegen E."/>
            <person name="Verardo R."/>
            <person name="Wei C.L."/>
            <person name="Yagi K."/>
            <person name="Yamanishi H."/>
            <person name="Zabarovsky E."/>
            <person name="Zhu S."/>
            <person name="Zimmer A."/>
            <person name="Hide W."/>
            <person name="Bult C."/>
            <person name="Grimmond S.M."/>
            <person name="Teasdale R.D."/>
            <person name="Liu E.T."/>
            <person name="Brusic V."/>
            <person name="Quackenbush J."/>
            <person name="Wahlestedt C."/>
            <person name="Mattick J.S."/>
            <person name="Hume D.A."/>
            <person name="Kai C."/>
            <person name="Sasaki D."/>
            <person name="Tomaru Y."/>
            <person name="Fukuda S."/>
            <person name="Kanamori-Katayama M."/>
            <person name="Suzuki M."/>
            <person name="Aoki J."/>
            <person name="Arakawa T."/>
            <person name="Iida J."/>
            <person name="Imamura K."/>
            <person name="Itoh M."/>
            <person name="Kato T."/>
            <person name="Kawaji H."/>
            <person name="Kawagashira N."/>
            <person name="Kawashima T."/>
            <person name="Kojima M."/>
            <person name="Kondo S."/>
            <person name="Konno H."/>
            <person name="Nakano K."/>
            <person name="Ninomiya N."/>
            <person name="Nishio T."/>
            <person name="Okada M."/>
            <person name="Plessy C."/>
            <person name="Shibata K."/>
            <person name="Shiraki T."/>
            <person name="Suzuki S."/>
            <person name="Tagami M."/>
            <person name="Waki K."/>
            <person name="Watahiki A."/>
            <person name="Okamura-Oho Y."/>
            <person name="Suzuki H."/>
            <person name="Kawai J."/>
            <person name="Hayashizaki Y."/>
        </authorList>
    </citation>
    <scope>NUCLEOTIDE SEQUENCE [LARGE SCALE MRNA]</scope>
    <source>
        <strain>C57BL/6J</strain>
        <tissue>Spinal ganglion</tissue>
    </source>
</reference>
<reference key="2">
    <citation type="journal article" date="2004" name="Genome Res.">
        <title>The status, quality, and expansion of the NIH full-length cDNA project: the Mammalian Gene Collection (MGC).</title>
        <authorList>
            <consortium name="The MGC Project Team"/>
        </authorList>
    </citation>
    <scope>NUCLEOTIDE SEQUENCE [LARGE SCALE MRNA]</scope>
    <source>
        <tissue>Brain</tissue>
    </source>
</reference>
<reference key="3">
    <citation type="journal article" date="2006" name="Mol. Genet. Genomics">
        <title>Characterization of a novel prospero-related homeobox gene, Prox2.</title>
        <authorList>
            <person name="Nishijima I."/>
            <person name="Ohtoshi A."/>
        </authorList>
    </citation>
    <scope>FUNCTION</scope>
    <scope>TISSUE SPECIFICITY</scope>
    <scope>DEVELOPMENTAL STAGE</scope>
    <scope>DISRUPTION PHENOTYPE</scope>
</reference>
<dbReference type="EMBL" id="AK051700">
    <property type="protein sequence ID" value="BAC34725.1"/>
    <property type="molecule type" value="mRNA"/>
</dbReference>
<dbReference type="EMBL" id="BC119330">
    <property type="protein sequence ID" value="AAI19331.1"/>
    <property type="molecule type" value="mRNA"/>
</dbReference>
<dbReference type="EMBL" id="BC119332">
    <property type="protein sequence ID" value="AAI19333.1"/>
    <property type="molecule type" value="mRNA"/>
</dbReference>
<dbReference type="CCDS" id="CCDS36495.1"/>
<dbReference type="RefSeq" id="NP_001348167.1">
    <property type="nucleotide sequence ID" value="NM_001361238.1"/>
</dbReference>
<dbReference type="RefSeq" id="NP_001348168.1">
    <property type="nucleotide sequence ID" value="NM_001361239.2"/>
</dbReference>
<dbReference type="RefSeq" id="NP_780407.1">
    <property type="nucleotide sequence ID" value="NM_175198.6"/>
</dbReference>
<dbReference type="RefSeq" id="XP_006516341.1">
    <property type="nucleotide sequence ID" value="XM_006516278.3"/>
</dbReference>
<dbReference type="RefSeq" id="XP_006516342.1">
    <property type="nucleotide sequence ID" value="XM_006516279.3"/>
</dbReference>
<dbReference type="RefSeq" id="XP_006516344.1">
    <property type="nucleotide sequence ID" value="XM_006516281.5"/>
</dbReference>
<dbReference type="RefSeq" id="XP_011242489.1">
    <property type="nucleotide sequence ID" value="XM_011244187.2"/>
</dbReference>
<dbReference type="RefSeq" id="XP_017170702.2">
    <property type="nucleotide sequence ID" value="XM_017315213.3"/>
</dbReference>
<dbReference type="RefSeq" id="XP_030102812.1">
    <property type="nucleotide sequence ID" value="XM_030246952.2"/>
</dbReference>
<dbReference type="SMR" id="Q8BII1"/>
<dbReference type="BioGRID" id="216004">
    <property type="interactions" value="2"/>
</dbReference>
<dbReference type="FunCoup" id="Q8BII1">
    <property type="interactions" value="736"/>
</dbReference>
<dbReference type="IntAct" id="Q8BII1">
    <property type="interactions" value="2"/>
</dbReference>
<dbReference type="STRING" id="10090.ENSMUSP00000135881"/>
<dbReference type="PhosphoSitePlus" id="Q8BII1"/>
<dbReference type="PaxDb" id="10090-ENSMUSP00000105878"/>
<dbReference type="ProteomicsDB" id="291662"/>
<dbReference type="Antibodypedia" id="50733">
    <property type="antibodies" value="69 antibodies from 13 providers"/>
</dbReference>
<dbReference type="DNASU" id="73422"/>
<dbReference type="Ensembl" id="ENSMUST00000110249.3">
    <property type="protein sequence ID" value="ENSMUSP00000105878.3"/>
    <property type="gene ID" value="ENSMUSG00000042320.18"/>
</dbReference>
<dbReference type="Ensembl" id="ENSMUST00000177289.9">
    <property type="protein sequence ID" value="ENSMUSP00000135881.2"/>
    <property type="gene ID" value="ENSMUSG00000042320.18"/>
</dbReference>
<dbReference type="GeneID" id="73422"/>
<dbReference type="KEGG" id="mmu:73422"/>
<dbReference type="UCSC" id="uc033ged.1">
    <property type="organism name" value="mouse"/>
</dbReference>
<dbReference type="AGR" id="MGI:1920672"/>
<dbReference type="CTD" id="283571"/>
<dbReference type="MGI" id="MGI:1920672">
    <property type="gene designation" value="Prox2"/>
</dbReference>
<dbReference type="VEuPathDB" id="HostDB:ENSMUSG00000042320"/>
<dbReference type="eggNOG" id="KOG3779">
    <property type="taxonomic scope" value="Eukaryota"/>
</dbReference>
<dbReference type="GeneTree" id="ENSGT00940000154790"/>
<dbReference type="HOGENOM" id="CLU_016051_1_0_1"/>
<dbReference type="InParanoid" id="Q8BII1"/>
<dbReference type="OMA" id="YPIPPRM"/>
<dbReference type="OrthoDB" id="10038576at2759"/>
<dbReference type="PhylomeDB" id="Q8BII1"/>
<dbReference type="TreeFam" id="TF316638"/>
<dbReference type="BioGRID-ORCS" id="73422">
    <property type="hits" value="2 hits in 76 CRISPR screens"/>
</dbReference>
<dbReference type="PRO" id="PR:Q8BII1"/>
<dbReference type="Proteomes" id="UP000000589">
    <property type="component" value="Chromosome 12"/>
</dbReference>
<dbReference type="RNAct" id="Q8BII1">
    <property type="molecule type" value="protein"/>
</dbReference>
<dbReference type="Bgee" id="ENSMUSG00000042320">
    <property type="expression patterns" value="Expressed in spermatid and 83 other cell types or tissues"/>
</dbReference>
<dbReference type="GO" id="GO:0005634">
    <property type="term" value="C:nucleus"/>
    <property type="evidence" value="ECO:0007669"/>
    <property type="project" value="UniProtKB-SubCell"/>
</dbReference>
<dbReference type="GO" id="GO:0003677">
    <property type="term" value="F:DNA binding"/>
    <property type="evidence" value="ECO:0007669"/>
    <property type="project" value="UniProtKB-KW"/>
</dbReference>
<dbReference type="GO" id="GO:0048468">
    <property type="term" value="P:cell development"/>
    <property type="evidence" value="ECO:0007669"/>
    <property type="project" value="UniProtKB-ARBA"/>
</dbReference>
<dbReference type="GO" id="GO:0007399">
    <property type="term" value="P:nervous system development"/>
    <property type="evidence" value="ECO:0007669"/>
    <property type="project" value="UniProtKB-ARBA"/>
</dbReference>
<dbReference type="GO" id="GO:0006355">
    <property type="term" value="P:regulation of DNA-templated transcription"/>
    <property type="evidence" value="ECO:0007669"/>
    <property type="project" value="InterPro"/>
</dbReference>
<dbReference type="FunFam" id="1.10.10.500:FF:000001">
    <property type="entry name" value="Prospero homeobox protein 1"/>
    <property type="match status" value="1"/>
</dbReference>
<dbReference type="Gene3D" id="1.10.10.500">
    <property type="entry name" value="Homeo-prospero domain"/>
    <property type="match status" value="1"/>
</dbReference>
<dbReference type="InterPro" id="IPR023082">
    <property type="entry name" value="Homeo_prospero_dom"/>
</dbReference>
<dbReference type="InterPro" id="IPR037131">
    <property type="entry name" value="Homeo_prospero_dom_sf"/>
</dbReference>
<dbReference type="InterPro" id="IPR009057">
    <property type="entry name" value="Homeodomain-like_sf"/>
</dbReference>
<dbReference type="InterPro" id="IPR039350">
    <property type="entry name" value="Prospero_homeodomain"/>
</dbReference>
<dbReference type="PANTHER" id="PTHR12198">
    <property type="entry name" value="HOMEOBOX PROTEIN PROSPERO/PROX-1/CEH-26"/>
    <property type="match status" value="1"/>
</dbReference>
<dbReference type="PANTHER" id="PTHR12198:SF5">
    <property type="entry name" value="PROSPERO HOMEOBOX PROTEIN 2"/>
    <property type="match status" value="1"/>
</dbReference>
<dbReference type="Pfam" id="PF05044">
    <property type="entry name" value="HPD"/>
    <property type="match status" value="1"/>
</dbReference>
<dbReference type="SUPFAM" id="SSF46689">
    <property type="entry name" value="Homeodomain-like"/>
    <property type="match status" value="1"/>
</dbReference>
<dbReference type="PROSITE" id="PS51818">
    <property type="entry name" value="HOMEO_PROSPERO"/>
    <property type="match status" value="1"/>
</dbReference>
<proteinExistence type="evidence at transcript level"/>
<protein>
    <recommendedName>
        <fullName>Prospero homeobox protein 2</fullName>
    </recommendedName>
    <alternativeName>
        <fullName>Homeobox prospero-like protein PROX2</fullName>
        <shortName>PROX-2</shortName>
    </alternativeName>
</protein>
<feature type="chain" id="PRO_0000342678" description="Prospero homeobox protein 2">
    <location>
        <begin position="1"/>
        <end position="593"/>
    </location>
</feature>
<feature type="domain" description="Prospero-type homeo" evidence="1">
    <location>
        <begin position="433"/>
        <end position="491"/>
    </location>
</feature>
<feature type="domain" description="Prospero" evidence="1">
    <location>
        <begin position="492"/>
        <end position="591"/>
    </location>
</feature>
<feature type="region of interest" description="Disordered" evidence="2">
    <location>
        <begin position="24"/>
        <end position="48"/>
    </location>
</feature>
<feature type="region of interest" description="Disordered" evidence="2">
    <location>
        <begin position="79"/>
        <end position="130"/>
    </location>
</feature>
<feature type="region of interest" description="Disordered" evidence="2">
    <location>
        <begin position="153"/>
        <end position="199"/>
    </location>
</feature>
<feature type="region of interest" description="Disordered" evidence="2">
    <location>
        <begin position="260"/>
        <end position="284"/>
    </location>
</feature>
<feature type="region of interest" description="Disordered" evidence="2">
    <location>
        <begin position="298"/>
        <end position="333"/>
    </location>
</feature>
<feature type="region of interest" description="Disordered" evidence="2">
    <location>
        <begin position="356"/>
        <end position="388"/>
    </location>
</feature>
<feature type="region of interest" description="Homeo-Prospero" evidence="1">
    <location>
        <begin position="433"/>
        <end position="591"/>
    </location>
</feature>
<feature type="compositionally biased region" description="Basic and acidic residues" evidence="2">
    <location>
        <begin position="87"/>
        <end position="99"/>
    </location>
</feature>
<feature type="compositionally biased region" description="Low complexity" evidence="2">
    <location>
        <begin position="167"/>
        <end position="181"/>
    </location>
</feature>
<feature type="compositionally biased region" description="Polar residues" evidence="2">
    <location>
        <begin position="363"/>
        <end position="380"/>
    </location>
</feature>
<comment type="function">
    <text evidence="3">Transcription regulator. Does not seem to be essential for embryonic development and postnatal survival.</text>
</comment>
<comment type="subcellular location">
    <subcellularLocation>
        <location evidence="4">Nucleus</location>
    </subcellularLocation>
</comment>
<comment type="tissue specificity">
    <text evidence="3">Expressed in testis.</text>
</comment>
<comment type="developmental stage">
    <text evidence="3">Expressed in the developing nervous system. Expressed at 9.5 dpc in the geniculate (VIIth), petrosal (IXth), and nodose (Xth) ganglia. Expressed in postnatal eyes.</text>
</comment>
<comment type="domain">
    <text evidence="1">The Prospero-type homeodomain and the adjacent Prospero domain act as a single structural unit, the Homeo-Prospero domain.</text>
</comment>
<comment type="disruption phenotype">
    <text evidence="3">Mice grow normally and body weight was similar to that of wild type. Heterozygous mutant mice survived to adulthood and appeared normal.</text>
</comment>
<comment type="similarity">
    <text evidence="1">Belongs to the Prospero homeodomain family.</text>
</comment>
<sequence>MDPPAAVLLPPQSRTCTHLAEETCMDQERSPATAEAGRDSFPSGQLPSSSLTEADWFWDEHIQAKRARVETIVRGMCLSPSSSVSGRARESLRCPEKGRERKRKQSLPMHQGPLKSSPAWERGPKKGGTRVKEQLHLLKQQLRHLQEHVLQATEPRAPAQSPGGTEPRSSPRARPRNSCSSGAWTVENEPHQSSSKDLCGAVKPGAAEVLQYSEEPMLCPSGPRALVETLRKELSRAVSQAVDSVLQQVLFDPQRHLTQQERSCQGLASEGRNQPSPPGRSAYKDPLALATLPRKIQPQAGVPLGNSTLARPLDSPMCPVSPRGVPRSYQSPLPNCPLTNVPSHTWENQMLRQLLGRGPDGQWSGSPPQDAAFQSHTSPESAQQPWGLSQQQLPLSLTPVHLESRPLPPPVKMEQGVLRGVADSLPFSSIHIQEGLSPGHLKKAKLMFFFTRYPSSSLLKAYFPDVQFNRCITSQMIKWFSNFREFYYIQMEKYARQALSDGITNAQALAVLRDSELFRVLNTHYNKGNDFEVPDCFLEIAALTLKEFFRAVLAGKDSDPSWKKPIYKVISKLDSDVPEMLKSPSFLPGLFPS</sequence>
<evidence type="ECO:0000255" key="1">
    <source>
        <dbReference type="PROSITE-ProRule" id="PRU01162"/>
    </source>
</evidence>
<evidence type="ECO:0000256" key="2">
    <source>
        <dbReference type="SAM" id="MobiDB-lite"/>
    </source>
</evidence>
<evidence type="ECO:0000269" key="3">
    <source>
    </source>
</evidence>
<evidence type="ECO:0000305" key="4"/>
<keyword id="KW-0238">DNA-binding</keyword>
<keyword id="KW-0371">Homeobox</keyword>
<keyword id="KW-0539">Nucleus</keyword>
<keyword id="KW-1185">Reference proteome</keyword>
<keyword id="KW-0804">Transcription</keyword>
<keyword id="KW-0805">Transcription regulation</keyword>
<organism>
    <name type="scientific">Mus musculus</name>
    <name type="common">Mouse</name>
    <dbReference type="NCBI Taxonomy" id="10090"/>
    <lineage>
        <taxon>Eukaryota</taxon>
        <taxon>Metazoa</taxon>
        <taxon>Chordata</taxon>
        <taxon>Craniata</taxon>
        <taxon>Vertebrata</taxon>
        <taxon>Euteleostomi</taxon>
        <taxon>Mammalia</taxon>
        <taxon>Eutheria</taxon>
        <taxon>Euarchontoglires</taxon>
        <taxon>Glires</taxon>
        <taxon>Rodentia</taxon>
        <taxon>Myomorpha</taxon>
        <taxon>Muroidea</taxon>
        <taxon>Muridae</taxon>
        <taxon>Murinae</taxon>
        <taxon>Mus</taxon>
        <taxon>Mus</taxon>
    </lineage>
</organism>